<dbReference type="EC" id="2.1.2.3" evidence="1"/>
<dbReference type="EC" id="3.5.4.10" evidence="1"/>
<dbReference type="EMBL" id="AL591981">
    <property type="protein sequence ID" value="CAC99843.1"/>
    <property type="molecule type" value="Genomic_DNA"/>
</dbReference>
<dbReference type="PIR" id="AE1295">
    <property type="entry name" value="AE1295"/>
</dbReference>
<dbReference type="RefSeq" id="NP_465290.1">
    <property type="nucleotide sequence ID" value="NC_003210.1"/>
</dbReference>
<dbReference type="RefSeq" id="WP_003722242.1">
    <property type="nucleotide sequence ID" value="NZ_CP149495.1"/>
</dbReference>
<dbReference type="SMR" id="Q8Y6C5"/>
<dbReference type="STRING" id="169963.gene:17594447"/>
<dbReference type="PaxDb" id="169963-lmo1765"/>
<dbReference type="EnsemblBacteria" id="CAC99843">
    <property type="protein sequence ID" value="CAC99843"/>
    <property type="gene ID" value="CAC99843"/>
</dbReference>
<dbReference type="GeneID" id="985977"/>
<dbReference type="KEGG" id="lmo:lmo1765"/>
<dbReference type="PATRIC" id="fig|169963.11.peg.1809"/>
<dbReference type="eggNOG" id="COG0138">
    <property type="taxonomic scope" value="Bacteria"/>
</dbReference>
<dbReference type="HOGENOM" id="CLU_016316_5_2_9"/>
<dbReference type="OrthoDB" id="9802065at2"/>
<dbReference type="PhylomeDB" id="Q8Y6C5"/>
<dbReference type="BioCyc" id="LMON169963:LMO1765-MONOMER"/>
<dbReference type="UniPathway" id="UPA00074">
    <property type="reaction ID" value="UER00133"/>
</dbReference>
<dbReference type="UniPathway" id="UPA00074">
    <property type="reaction ID" value="UER00135"/>
</dbReference>
<dbReference type="Proteomes" id="UP000000817">
    <property type="component" value="Chromosome"/>
</dbReference>
<dbReference type="GO" id="GO:0005829">
    <property type="term" value="C:cytosol"/>
    <property type="evidence" value="ECO:0000318"/>
    <property type="project" value="GO_Central"/>
</dbReference>
<dbReference type="GO" id="GO:0003937">
    <property type="term" value="F:IMP cyclohydrolase activity"/>
    <property type="evidence" value="ECO:0000318"/>
    <property type="project" value="GO_Central"/>
</dbReference>
<dbReference type="GO" id="GO:0004643">
    <property type="term" value="F:phosphoribosylaminoimidazolecarboxamide formyltransferase activity"/>
    <property type="evidence" value="ECO:0000318"/>
    <property type="project" value="GO_Central"/>
</dbReference>
<dbReference type="GO" id="GO:0006189">
    <property type="term" value="P:'de novo' IMP biosynthetic process"/>
    <property type="evidence" value="ECO:0000318"/>
    <property type="project" value="GO_Central"/>
</dbReference>
<dbReference type="CDD" id="cd01421">
    <property type="entry name" value="IMPCH"/>
    <property type="match status" value="1"/>
</dbReference>
<dbReference type="FunFam" id="3.40.140.20:FF:000001">
    <property type="entry name" value="Bifunctional purine biosynthesis protein PurH"/>
    <property type="match status" value="1"/>
</dbReference>
<dbReference type="FunFam" id="3.40.140.20:FF:000002">
    <property type="entry name" value="Bifunctional purine biosynthesis protein PurH"/>
    <property type="match status" value="1"/>
</dbReference>
<dbReference type="FunFam" id="3.40.50.1380:FF:000001">
    <property type="entry name" value="Bifunctional purine biosynthesis protein PurH"/>
    <property type="match status" value="1"/>
</dbReference>
<dbReference type="Gene3D" id="3.40.140.20">
    <property type="match status" value="2"/>
</dbReference>
<dbReference type="Gene3D" id="3.40.50.1380">
    <property type="entry name" value="Methylglyoxal synthase-like domain"/>
    <property type="match status" value="1"/>
</dbReference>
<dbReference type="HAMAP" id="MF_00139">
    <property type="entry name" value="PurH"/>
    <property type="match status" value="1"/>
</dbReference>
<dbReference type="InterPro" id="IPR024051">
    <property type="entry name" value="AICAR_Tfase_dup_dom_sf"/>
</dbReference>
<dbReference type="InterPro" id="IPR016193">
    <property type="entry name" value="Cytidine_deaminase-like"/>
</dbReference>
<dbReference type="InterPro" id="IPR011607">
    <property type="entry name" value="MGS-like_dom"/>
</dbReference>
<dbReference type="InterPro" id="IPR036914">
    <property type="entry name" value="MGS-like_dom_sf"/>
</dbReference>
<dbReference type="InterPro" id="IPR002695">
    <property type="entry name" value="PurH-like"/>
</dbReference>
<dbReference type="NCBIfam" id="NF002049">
    <property type="entry name" value="PRK00881.1"/>
    <property type="match status" value="1"/>
</dbReference>
<dbReference type="NCBIfam" id="TIGR00355">
    <property type="entry name" value="purH"/>
    <property type="match status" value="1"/>
</dbReference>
<dbReference type="PANTHER" id="PTHR11692:SF0">
    <property type="entry name" value="BIFUNCTIONAL PURINE BIOSYNTHESIS PROTEIN ATIC"/>
    <property type="match status" value="1"/>
</dbReference>
<dbReference type="PANTHER" id="PTHR11692">
    <property type="entry name" value="BIFUNCTIONAL PURINE BIOSYNTHESIS PROTEIN PURH"/>
    <property type="match status" value="1"/>
</dbReference>
<dbReference type="Pfam" id="PF01808">
    <property type="entry name" value="AICARFT_IMPCHas"/>
    <property type="match status" value="1"/>
</dbReference>
<dbReference type="Pfam" id="PF02142">
    <property type="entry name" value="MGS"/>
    <property type="match status" value="1"/>
</dbReference>
<dbReference type="PIRSF" id="PIRSF000414">
    <property type="entry name" value="AICARFT_IMPCHas"/>
    <property type="match status" value="1"/>
</dbReference>
<dbReference type="SMART" id="SM00798">
    <property type="entry name" value="AICARFT_IMPCHas"/>
    <property type="match status" value="1"/>
</dbReference>
<dbReference type="SMART" id="SM00851">
    <property type="entry name" value="MGS"/>
    <property type="match status" value="1"/>
</dbReference>
<dbReference type="SUPFAM" id="SSF53927">
    <property type="entry name" value="Cytidine deaminase-like"/>
    <property type="match status" value="1"/>
</dbReference>
<dbReference type="SUPFAM" id="SSF52335">
    <property type="entry name" value="Methylglyoxal synthase-like"/>
    <property type="match status" value="1"/>
</dbReference>
<dbReference type="PROSITE" id="PS51855">
    <property type="entry name" value="MGS"/>
    <property type="match status" value="1"/>
</dbReference>
<comment type="catalytic activity">
    <reaction evidence="1">
        <text>(6R)-10-formyltetrahydrofolate + 5-amino-1-(5-phospho-beta-D-ribosyl)imidazole-4-carboxamide = 5-formamido-1-(5-phospho-D-ribosyl)imidazole-4-carboxamide + (6S)-5,6,7,8-tetrahydrofolate</text>
        <dbReference type="Rhea" id="RHEA:22192"/>
        <dbReference type="ChEBI" id="CHEBI:57453"/>
        <dbReference type="ChEBI" id="CHEBI:58467"/>
        <dbReference type="ChEBI" id="CHEBI:58475"/>
        <dbReference type="ChEBI" id="CHEBI:195366"/>
        <dbReference type="EC" id="2.1.2.3"/>
    </reaction>
</comment>
<comment type="catalytic activity">
    <reaction evidence="1">
        <text>IMP + H2O = 5-formamido-1-(5-phospho-D-ribosyl)imidazole-4-carboxamide</text>
        <dbReference type="Rhea" id="RHEA:18445"/>
        <dbReference type="ChEBI" id="CHEBI:15377"/>
        <dbReference type="ChEBI" id="CHEBI:58053"/>
        <dbReference type="ChEBI" id="CHEBI:58467"/>
        <dbReference type="EC" id="3.5.4.10"/>
    </reaction>
</comment>
<comment type="pathway">
    <text evidence="1">Purine metabolism; IMP biosynthesis via de novo pathway; 5-formamido-1-(5-phospho-D-ribosyl)imidazole-4-carboxamide from 5-amino-1-(5-phospho-D-ribosyl)imidazole-4-carboxamide (10-formyl THF route): step 1/1.</text>
</comment>
<comment type="pathway">
    <text evidence="1">Purine metabolism; IMP biosynthesis via de novo pathway; IMP from 5-formamido-1-(5-phospho-D-ribosyl)imidazole-4-carboxamide: step 1/1.</text>
</comment>
<comment type="domain">
    <text evidence="1">The IMP cyclohydrolase activity resides in the N-terminal region.</text>
</comment>
<comment type="similarity">
    <text evidence="1">Belongs to the PurH family.</text>
</comment>
<keyword id="KW-0378">Hydrolase</keyword>
<keyword id="KW-0511">Multifunctional enzyme</keyword>
<keyword id="KW-0658">Purine biosynthesis</keyword>
<keyword id="KW-1185">Reference proteome</keyword>
<keyword id="KW-0808">Transferase</keyword>
<name>PUR9_LISMO</name>
<feature type="chain" id="PRO_0000192103" description="Bifunctional purine biosynthesis protein PurH">
    <location>
        <begin position="1"/>
        <end position="509"/>
    </location>
</feature>
<feature type="domain" description="MGS-like" evidence="2">
    <location>
        <begin position="1"/>
        <end position="144"/>
    </location>
</feature>
<sequence>MKRALISVSDKNGIVPFAEKLVELGVEIISTGGTKAAFEQAGVPVTGIEEVTEFPEMLDGRVKTLHPAIHGGLLARRDTAEHMEAIAAHNIKPIDLVIVNLYPFQETIQKPGVTLEEAIENIDIGGPSMLRSAAKNYAAVTVVVDTADYDAVLTELQEHGATTFETRQRLAAKVFRHTAAYDALIAEYLTNITGETFPEKVTFTYNRKQVLRYGENPHQDAAFYTEPGTIENSISAAKQLHGKELSYNNIRDADAALKIASEFTEPVAVAVKHMNPCGVGVGENIEEAYLKAYEADETSIFGGIVALNKEVDAKTAEHMSKIFLEIVIAPSFSEEAFAILAKKKNIRLLTVPFAGNMEGFEKTSVNGGLLIQANDSLVEDTTSYEVVTEKQPTDSEMKALLAQWKIVKHVKSNAIVVGSDKQTLGIGAGQMNRIGSALIALEQAGEKAKGAVLASDAFFPMDDTVEAAAKSGITAIIQPGGSIKDKESIAMADKYGISMVLTHVRHFKH</sequence>
<organism>
    <name type="scientific">Listeria monocytogenes serovar 1/2a (strain ATCC BAA-679 / EGD-e)</name>
    <dbReference type="NCBI Taxonomy" id="169963"/>
    <lineage>
        <taxon>Bacteria</taxon>
        <taxon>Bacillati</taxon>
        <taxon>Bacillota</taxon>
        <taxon>Bacilli</taxon>
        <taxon>Bacillales</taxon>
        <taxon>Listeriaceae</taxon>
        <taxon>Listeria</taxon>
    </lineage>
</organism>
<gene>
    <name evidence="1" type="primary">purH</name>
    <name type="ordered locus">lmo1765</name>
</gene>
<accession>Q8Y6C5</accession>
<proteinExistence type="inferred from homology"/>
<evidence type="ECO:0000255" key="1">
    <source>
        <dbReference type="HAMAP-Rule" id="MF_00139"/>
    </source>
</evidence>
<evidence type="ECO:0000255" key="2">
    <source>
        <dbReference type="PROSITE-ProRule" id="PRU01202"/>
    </source>
</evidence>
<protein>
    <recommendedName>
        <fullName evidence="1">Bifunctional purine biosynthesis protein PurH</fullName>
    </recommendedName>
    <domain>
        <recommendedName>
            <fullName evidence="1">Phosphoribosylaminoimidazolecarboxamide formyltransferase</fullName>
            <ecNumber evidence="1">2.1.2.3</ecNumber>
        </recommendedName>
        <alternativeName>
            <fullName evidence="1">AICAR transformylase</fullName>
        </alternativeName>
    </domain>
    <domain>
        <recommendedName>
            <fullName evidence="1">IMP cyclohydrolase</fullName>
            <ecNumber evidence="1">3.5.4.10</ecNumber>
        </recommendedName>
        <alternativeName>
            <fullName evidence="1">ATIC</fullName>
        </alternativeName>
        <alternativeName>
            <fullName evidence="1">IMP synthase</fullName>
        </alternativeName>
        <alternativeName>
            <fullName evidence="1">Inosinicase</fullName>
        </alternativeName>
    </domain>
</protein>
<reference key="1">
    <citation type="journal article" date="2001" name="Science">
        <title>Comparative genomics of Listeria species.</title>
        <authorList>
            <person name="Glaser P."/>
            <person name="Frangeul L."/>
            <person name="Buchrieser C."/>
            <person name="Rusniok C."/>
            <person name="Amend A."/>
            <person name="Baquero F."/>
            <person name="Berche P."/>
            <person name="Bloecker H."/>
            <person name="Brandt P."/>
            <person name="Chakraborty T."/>
            <person name="Charbit A."/>
            <person name="Chetouani F."/>
            <person name="Couve E."/>
            <person name="de Daruvar A."/>
            <person name="Dehoux P."/>
            <person name="Domann E."/>
            <person name="Dominguez-Bernal G."/>
            <person name="Duchaud E."/>
            <person name="Durant L."/>
            <person name="Dussurget O."/>
            <person name="Entian K.-D."/>
            <person name="Fsihi H."/>
            <person name="Garcia-del Portillo F."/>
            <person name="Garrido P."/>
            <person name="Gautier L."/>
            <person name="Goebel W."/>
            <person name="Gomez-Lopez N."/>
            <person name="Hain T."/>
            <person name="Hauf J."/>
            <person name="Jackson D."/>
            <person name="Jones L.-M."/>
            <person name="Kaerst U."/>
            <person name="Kreft J."/>
            <person name="Kuhn M."/>
            <person name="Kunst F."/>
            <person name="Kurapkat G."/>
            <person name="Madueno E."/>
            <person name="Maitournam A."/>
            <person name="Mata Vicente J."/>
            <person name="Ng E."/>
            <person name="Nedjari H."/>
            <person name="Nordsiek G."/>
            <person name="Novella S."/>
            <person name="de Pablos B."/>
            <person name="Perez-Diaz J.-C."/>
            <person name="Purcell R."/>
            <person name="Remmel B."/>
            <person name="Rose M."/>
            <person name="Schlueter T."/>
            <person name="Simoes N."/>
            <person name="Tierrez A."/>
            <person name="Vazquez-Boland J.-A."/>
            <person name="Voss H."/>
            <person name="Wehland J."/>
            <person name="Cossart P."/>
        </authorList>
    </citation>
    <scope>NUCLEOTIDE SEQUENCE [LARGE SCALE GENOMIC DNA]</scope>
    <source>
        <strain>ATCC BAA-679 / EGD-e</strain>
    </source>
</reference>